<reference key="1">
    <citation type="journal article" date="2002" name="Nature">
        <title>Comparison of the genomes of two Xanthomonas pathogens with differing host specificities.</title>
        <authorList>
            <person name="da Silva A.C.R."/>
            <person name="Ferro J.A."/>
            <person name="Reinach F.C."/>
            <person name="Farah C.S."/>
            <person name="Furlan L.R."/>
            <person name="Quaggio R.B."/>
            <person name="Monteiro-Vitorello C.B."/>
            <person name="Van Sluys M.A."/>
            <person name="Almeida N.F. Jr."/>
            <person name="Alves L.M.C."/>
            <person name="do Amaral A.M."/>
            <person name="Bertolini M.C."/>
            <person name="Camargo L.E.A."/>
            <person name="Camarotte G."/>
            <person name="Cannavan F."/>
            <person name="Cardozo J."/>
            <person name="Chambergo F."/>
            <person name="Ciapina L.P."/>
            <person name="Cicarelli R.M.B."/>
            <person name="Coutinho L.L."/>
            <person name="Cursino-Santos J.R."/>
            <person name="El-Dorry H."/>
            <person name="Faria J.B."/>
            <person name="Ferreira A.J.S."/>
            <person name="Ferreira R.C.C."/>
            <person name="Ferro M.I.T."/>
            <person name="Formighieri E.F."/>
            <person name="Franco M.C."/>
            <person name="Greggio C.C."/>
            <person name="Gruber A."/>
            <person name="Katsuyama A.M."/>
            <person name="Kishi L.T."/>
            <person name="Leite R.P."/>
            <person name="Lemos E.G.M."/>
            <person name="Lemos M.V.F."/>
            <person name="Locali E.C."/>
            <person name="Machado M.A."/>
            <person name="Madeira A.M.B.N."/>
            <person name="Martinez-Rossi N.M."/>
            <person name="Martins E.C."/>
            <person name="Meidanis J."/>
            <person name="Menck C.F.M."/>
            <person name="Miyaki C.Y."/>
            <person name="Moon D.H."/>
            <person name="Moreira L.M."/>
            <person name="Novo M.T.M."/>
            <person name="Okura V.K."/>
            <person name="Oliveira M.C."/>
            <person name="Oliveira V.R."/>
            <person name="Pereira H.A."/>
            <person name="Rossi A."/>
            <person name="Sena J.A.D."/>
            <person name="Silva C."/>
            <person name="de Souza R.F."/>
            <person name="Spinola L.A.F."/>
            <person name="Takita M.A."/>
            <person name="Tamura R.E."/>
            <person name="Teixeira E.C."/>
            <person name="Tezza R.I.D."/>
            <person name="Trindade dos Santos M."/>
            <person name="Truffi D."/>
            <person name="Tsai S.M."/>
            <person name="White F.F."/>
            <person name="Setubal J.C."/>
            <person name="Kitajima J.P."/>
        </authorList>
    </citation>
    <scope>NUCLEOTIDE SEQUENCE [LARGE SCALE GENOMIC DNA]</scope>
    <source>
        <strain>306</strain>
    </source>
</reference>
<organism>
    <name type="scientific">Xanthomonas axonopodis pv. citri (strain 306)</name>
    <dbReference type="NCBI Taxonomy" id="190486"/>
    <lineage>
        <taxon>Bacteria</taxon>
        <taxon>Pseudomonadati</taxon>
        <taxon>Pseudomonadota</taxon>
        <taxon>Gammaproteobacteria</taxon>
        <taxon>Lysobacterales</taxon>
        <taxon>Lysobacteraceae</taxon>
        <taxon>Xanthomonas</taxon>
    </lineage>
</organism>
<proteinExistence type="inferred from homology"/>
<evidence type="ECO:0000255" key="1">
    <source>
        <dbReference type="HAMAP-Rule" id="MF_01702"/>
    </source>
</evidence>
<protein>
    <recommendedName>
        <fullName evidence="1">Phosphate import ATP-binding protein PstB</fullName>
        <ecNumber evidence="1">7.3.2.1</ecNumber>
    </recommendedName>
    <alternativeName>
        <fullName evidence="1">ABC phosphate transporter</fullName>
    </alternativeName>
    <alternativeName>
        <fullName evidence="1">Phosphate-transporting ATPase</fullName>
    </alternativeName>
</protein>
<comment type="function">
    <text evidence="1">Part of the ABC transporter complex PstSACB involved in phosphate import. Responsible for energy coupling to the transport system.</text>
</comment>
<comment type="catalytic activity">
    <reaction evidence="1">
        <text>phosphate(out) + ATP + H2O = ADP + 2 phosphate(in) + H(+)</text>
        <dbReference type="Rhea" id="RHEA:24440"/>
        <dbReference type="ChEBI" id="CHEBI:15377"/>
        <dbReference type="ChEBI" id="CHEBI:15378"/>
        <dbReference type="ChEBI" id="CHEBI:30616"/>
        <dbReference type="ChEBI" id="CHEBI:43474"/>
        <dbReference type="ChEBI" id="CHEBI:456216"/>
        <dbReference type="EC" id="7.3.2.1"/>
    </reaction>
</comment>
<comment type="subunit">
    <text evidence="1">The complex is composed of two ATP-binding proteins (PstB), two transmembrane proteins (PstC and PstA) and a solute-binding protein (PstS).</text>
</comment>
<comment type="subcellular location">
    <subcellularLocation>
        <location evidence="1">Cell inner membrane</location>
        <topology evidence="1">Peripheral membrane protein</topology>
    </subcellularLocation>
</comment>
<comment type="similarity">
    <text evidence="1">Belongs to the ABC transporter superfamily. Phosphate importer (TC 3.A.1.7) family.</text>
</comment>
<keyword id="KW-0067">ATP-binding</keyword>
<keyword id="KW-0997">Cell inner membrane</keyword>
<keyword id="KW-1003">Cell membrane</keyword>
<keyword id="KW-0472">Membrane</keyword>
<keyword id="KW-0547">Nucleotide-binding</keyword>
<keyword id="KW-0592">Phosphate transport</keyword>
<keyword id="KW-1278">Translocase</keyword>
<keyword id="KW-0813">Transport</keyword>
<name>PSTB_XANAC</name>
<dbReference type="EC" id="7.3.2.1" evidence="1"/>
<dbReference type="EMBL" id="AE008923">
    <property type="protein sequence ID" value="AAM36442.1"/>
    <property type="molecule type" value="Genomic_DNA"/>
</dbReference>
<dbReference type="SMR" id="Q8PM59"/>
<dbReference type="KEGG" id="xac:XAC1574"/>
<dbReference type="eggNOG" id="COG1117">
    <property type="taxonomic scope" value="Bacteria"/>
</dbReference>
<dbReference type="HOGENOM" id="CLU_000604_1_22_6"/>
<dbReference type="PHI-base" id="PHI:3412"/>
<dbReference type="Proteomes" id="UP000000576">
    <property type="component" value="Chromosome"/>
</dbReference>
<dbReference type="GO" id="GO:0005886">
    <property type="term" value="C:plasma membrane"/>
    <property type="evidence" value="ECO:0007669"/>
    <property type="project" value="UniProtKB-SubCell"/>
</dbReference>
<dbReference type="GO" id="GO:0005524">
    <property type="term" value="F:ATP binding"/>
    <property type="evidence" value="ECO:0007669"/>
    <property type="project" value="UniProtKB-KW"/>
</dbReference>
<dbReference type="GO" id="GO:0016887">
    <property type="term" value="F:ATP hydrolysis activity"/>
    <property type="evidence" value="ECO:0007669"/>
    <property type="project" value="InterPro"/>
</dbReference>
<dbReference type="GO" id="GO:0015415">
    <property type="term" value="F:ATPase-coupled phosphate ion transmembrane transporter activity"/>
    <property type="evidence" value="ECO:0007669"/>
    <property type="project" value="UniProtKB-EC"/>
</dbReference>
<dbReference type="GO" id="GO:0035435">
    <property type="term" value="P:phosphate ion transmembrane transport"/>
    <property type="evidence" value="ECO:0007669"/>
    <property type="project" value="InterPro"/>
</dbReference>
<dbReference type="CDD" id="cd03260">
    <property type="entry name" value="ABC_PstB_phosphate_transporter"/>
    <property type="match status" value="1"/>
</dbReference>
<dbReference type="FunFam" id="3.40.50.300:FF:000132">
    <property type="entry name" value="Phosphate import ATP-binding protein PstB"/>
    <property type="match status" value="1"/>
</dbReference>
<dbReference type="Gene3D" id="3.40.50.300">
    <property type="entry name" value="P-loop containing nucleotide triphosphate hydrolases"/>
    <property type="match status" value="1"/>
</dbReference>
<dbReference type="InterPro" id="IPR003593">
    <property type="entry name" value="AAA+_ATPase"/>
</dbReference>
<dbReference type="InterPro" id="IPR003439">
    <property type="entry name" value="ABC_transporter-like_ATP-bd"/>
</dbReference>
<dbReference type="InterPro" id="IPR017871">
    <property type="entry name" value="ABC_transporter-like_CS"/>
</dbReference>
<dbReference type="InterPro" id="IPR027417">
    <property type="entry name" value="P-loop_NTPase"/>
</dbReference>
<dbReference type="InterPro" id="IPR005670">
    <property type="entry name" value="PstB-like"/>
</dbReference>
<dbReference type="NCBIfam" id="TIGR00972">
    <property type="entry name" value="3a0107s01c2"/>
    <property type="match status" value="1"/>
</dbReference>
<dbReference type="PANTHER" id="PTHR43423">
    <property type="entry name" value="ABC TRANSPORTER I FAMILY MEMBER 17"/>
    <property type="match status" value="1"/>
</dbReference>
<dbReference type="PANTHER" id="PTHR43423:SF3">
    <property type="entry name" value="PHOSPHATE IMPORT ATP-BINDING PROTEIN PSTB"/>
    <property type="match status" value="1"/>
</dbReference>
<dbReference type="Pfam" id="PF00005">
    <property type="entry name" value="ABC_tran"/>
    <property type="match status" value="1"/>
</dbReference>
<dbReference type="SMART" id="SM00382">
    <property type="entry name" value="AAA"/>
    <property type="match status" value="1"/>
</dbReference>
<dbReference type="SUPFAM" id="SSF52540">
    <property type="entry name" value="P-loop containing nucleoside triphosphate hydrolases"/>
    <property type="match status" value="1"/>
</dbReference>
<dbReference type="PROSITE" id="PS00211">
    <property type="entry name" value="ABC_TRANSPORTER_1"/>
    <property type="match status" value="1"/>
</dbReference>
<dbReference type="PROSITE" id="PS50893">
    <property type="entry name" value="ABC_TRANSPORTER_2"/>
    <property type="match status" value="1"/>
</dbReference>
<dbReference type="PROSITE" id="PS51238">
    <property type="entry name" value="PSTB"/>
    <property type="match status" value="1"/>
</dbReference>
<sequence length="267" mass="30089">MHRIAVPAATGAPTAQAPVKVAARNLDFYYDKYHALKSINIEIPEKRVTALIGPSGCGKSTLLRIFNRIYALYPKMEARGEVLLDNENILSPKYPMNRLRSKVGMVFQKPVPFPMTIFENVAYGIRHHEKLSKADMQNRVEQALRQGALWDEVKDKLGQSALGLSGGQQQRLCIARAVALRPDVLLLDEPTSALDPISTSRIEQLVEELKRDYTIVIVTHNMQQAARVSDYTAFMYLGDLIEHDRTETIFSQPSKQQTEDYITGRFG</sequence>
<gene>
    <name evidence="1" type="primary">pstB</name>
    <name type="ordered locus">XAC1574</name>
</gene>
<accession>Q8PM59</accession>
<feature type="chain" id="PRO_0000092933" description="Phosphate import ATP-binding protein PstB">
    <location>
        <begin position="1"/>
        <end position="267"/>
    </location>
</feature>
<feature type="domain" description="ABC transporter" evidence="1">
    <location>
        <begin position="21"/>
        <end position="262"/>
    </location>
</feature>
<feature type="binding site" evidence="1">
    <location>
        <begin position="53"/>
        <end position="60"/>
    </location>
    <ligand>
        <name>ATP</name>
        <dbReference type="ChEBI" id="CHEBI:30616"/>
    </ligand>
</feature>